<gene>
    <name type="primary">NDRG3</name>
</gene>
<dbReference type="EMBL" id="AB044943">
    <property type="protein sequence ID" value="BAB20067.1"/>
    <property type="molecule type" value="mRNA"/>
</dbReference>
<dbReference type="EMBL" id="AF251054">
    <property type="protein sequence ID" value="AAK34944.1"/>
    <property type="molecule type" value="mRNA"/>
</dbReference>
<dbReference type="EMBL" id="AF308609">
    <property type="protein sequence ID" value="AAL08807.1"/>
    <property type="molecule type" value="mRNA"/>
</dbReference>
<dbReference type="EMBL" id="AK023618">
    <property type="protein sequence ID" value="BAB14620.1"/>
    <property type="molecule type" value="mRNA"/>
</dbReference>
<dbReference type="EMBL" id="AK027665">
    <property type="protein sequence ID" value="BAB55277.1"/>
    <property type="molecule type" value="mRNA"/>
</dbReference>
<dbReference type="EMBL" id="AL031662">
    <property type="status" value="NOT_ANNOTATED_CDS"/>
    <property type="molecule type" value="Genomic_DNA"/>
</dbReference>
<dbReference type="EMBL" id="AL132768">
    <property type="status" value="NOT_ANNOTATED_CDS"/>
    <property type="molecule type" value="Genomic_DNA"/>
</dbReference>
<dbReference type="EMBL" id="CH471077">
    <property type="protein sequence ID" value="EAW76112.1"/>
    <property type="molecule type" value="Genomic_DNA"/>
</dbReference>
<dbReference type="EMBL" id="CH471077">
    <property type="protein sequence ID" value="EAW76109.1"/>
    <property type="molecule type" value="Genomic_DNA"/>
</dbReference>
<dbReference type="EMBL" id="CH471077">
    <property type="protein sequence ID" value="EAW76114.1"/>
    <property type="molecule type" value="Genomic_DNA"/>
</dbReference>
<dbReference type="EMBL" id="CH471077">
    <property type="protein sequence ID" value="EAW76115.1"/>
    <property type="molecule type" value="Genomic_DNA"/>
</dbReference>
<dbReference type="EMBL" id="BC136489">
    <property type="protein sequence ID" value="AAI36490.1"/>
    <property type="molecule type" value="mRNA"/>
</dbReference>
<dbReference type="CCDS" id="CCDS13284.1">
    <molecule id="Q9UGV2-2"/>
</dbReference>
<dbReference type="CCDS" id="CCDS13285.1">
    <molecule id="Q9UGV2-1"/>
</dbReference>
<dbReference type="RefSeq" id="NP_071922.2">
    <molecule id="Q9UGV2-2"/>
    <property type="nucleotide sequence ID" value="NM_022477.3"/>
</dbReference>
<dbReference type="RefSeq" id="NP_114402.1">
    <molecule id="Q9UGV2-1"/>
    <property type="nucleotide sequence ID" value="NM_032013.4"/>
</dbReference>
<dbReference type="RefSeq" id="XP_016883468.1">
    <molecule id="Q9UGV2-1"/>
    <property type="nucleotide sequence ID" value="XM_017027979.2"/>
</dbReference>
<dbReference type="RefSeq" id="XP_054179739.1">
    <molecule id="Q9UGV2-1"/>
    <property type="nucleotide sequence ID" value="XM_054323764.1"/>
</dbReference>
<dbReference type="PDB" id="6L4B">
    <property type="method" value="X-ray"/>
    <property type="resolution" value="2.20 A"/>
    <property type="chains" value="A/B/C/D/E/F=1-375"/>
</dbReference>
<dbReference type="PDB" id="6L4G">
    <property type="method" value="X-ray"/>
    <property type="resolution" value="3.30 A"/>
    <property type="chains" value="A/B=1-375"/>
</dbReference>
<dbReference type="PDB" id="6L4H">
    <property type="method" value="X-ray"/>
    <property type="resolution" value="3.40 A"/>
    <property type="chains" value="A/B/C/D=1-375"/>
</dbReference>
<dbReference type="PDBsum" id="6L4B"/>
<dbReference type="PDBsum" id="6L4G"/>
<dbReference type="PDBsum" id="6L4H"/>
<dbReference type="SMR" id="Q9UGV2"/>
<dbReference type="BioGRID" id="121519">
    <property type="interactions" value="43"/>
</dbReference>
<dbReference type="FunCoup" id="Q9UGV2">
    <property type="interactions" value="1115"/>
</dbReference>
<dbReference type="IntAct" id="Q9UGV2">
    <property type="interactions" value="14"/>
</dbReference>
<dbReference type="MINT" id="Q9UGV2"/>
<dbReference type="STRING" id="9606.ENSP00000345292"/>
<dbReference type="ESTHER" id="human-NDRG3">
    <property type="family name" value="Ndr_family"/>
</dbReference>
<dbReference type="MEROPS" id="S33.987"/>
<dbReference type="GlyCosmos" id="Q9UGV2">
    <property type="glycosylation" value="1 site, 1 glycan"/>
</dbReference>
<dbReference type="GlyGen" id="Q9UGV2">
    <property type="glycosylation" value="1 site, 1 O-linked glycan (1 site)"/>
</dbReference>
<dbReference type="iPTMnet" id="Q9UGV2"/>
<dbReference type="PhosphoSitePlus" id="Q9UGV2"/>
<dbReference type="SwissPalm" id="Q9UGV2"/>
<dbReference type="BioMuta" id="NDRG3"/>
<dbReference type="DMDM" id="20141613"/>
<dbReference type="jPOST" id="Q9UGV2"/>
<dbReference type="MassIVE" id="Q9UGV2"/>
<dbReference type="PaxDb" id="9606-ENSP00000345292"/>
<dbReference type="PeptideAtlas" id="Q9UGV2"/>
<dbReference type="ProteomicsDB" id="84267">
    <molecule id="Q9UGV2-1"/>
</dbReference>
<dbReference type="ProteomicsDB" id="84268">
    <molecule id="Q9UGV2-2"/>
</dbReference>
<dbReference type="ProteomicsDB" id="84269">
    <molecule id="Q9UGV2-3"/>
</dbReference>
<dbReference type="Pumba" id="Q9UGV2"/>
<dbReference type="Antibodypedia" id="11784">
    <property type="antibodies" value="139 antibodies from 29 providers"/>
</dbReference>
<dbReference type="DNASU" id="57446"/>
<dbReference type="Ensembl" id="ENST00000349004.6">
    <molecule id="Q9UGV2-1"/>
    <property type="protein sequence ID" value="ENSP00000345292.1"/>
    <property type="gene ID" value="ENSG00000101079.21"/>
</dbReference>
<dbReference type="Ensembl" id="ENST00000359675.6">
    <molecule id="Q9UGV2-2"/>
    <property type="protein sequence ID" value="ENSP00000352703.2"/>
    <property type="gene ID" value="ENSG00000101079.21"/>
</dbReference>
<dbReference type="GeneID" id="57446"/>
<dbReference type="KEGG" id="hsa:57446"/>
<dbReference type="MANE-Select" id="ENST00000349004.6">
    <property type="protein sequence ID" value="ENSP00000345292.1"/>
    <property type="RefSeq nucleotide sequence ID" value="NM_032013.4"/>
    <property type="RefSeq protein sequence ID" value="NP_114402.1"/>
</dbReference>
<dbReference type="UCSC" id="uc002xfw.4">
    <molecule id="Q9UGV2-1"/>
    <property type="organism name" value="human"/>
</dbReference>
<dbReference type="AGR" id="HGNC:14462"/>
<dbReference type="CTD" id="57446"/>
<dbReference type="DisGeNET" id="57446"/>
<dbReference type="GeneCards" id="NDRG3"/>
<dbReference type="HGNC" id="HGNC:14462">
    <property type="gene designation" value="NDRG3"/>
</dbReference>
<dbReference type="HPA" id="ENSG00000101079">
    <property type="expression patterns" value="Tissue enhanced (brain, retina)"/>
</dbReference>
<dbReference type="MIM" id="605273">
    <property type="type" value="gene"/>
</dbReference>
<dbReference type="neXtProt" id="NX_Q9UGV2"/>
<dbReference type="OpenTargets" id="ENSG00000101079"/>
<dbReference type="PharmGKB" id="PA31484"/>
<dbReference type="VEuPathDB" id="HostDB:ENSG00000101079"/>
<dbReference type="eggNOG" id="KOG2931">
    <property type="taxonomic scope" value="Eukaryota"/>
</dbReference>
<dbReference type="GeneTree" id="ENSGT00950000182872"/>
<dbReference type="HOGENOM" id="CLU_035361_1_0_1"/>
<dbReference type="InParanoid" id="Q9UGV2"/>
<dbReference type="OMA" id="ITQYFAV"/>
<dbReference type="OrthoDB" id="741027at2759"/>
<dbReference type="PAN-GO" id="Q9UGV2">
    <property type="GO annotations" value="2 GO annotations based on evolutionary models"/>
</dbReference>
<dbReference type="PhylomeDB" id="Q9UGV2"/>
<dbReference type="TreeFam" id="TF313168"/>
<dbReference type="PathwayCommons" id="Q9UGV2"/>
<dbReference type="SignaLink" id="Q9UGV2"/>
<dbReference type="BioGRID-ORCS" id="57446">
    <property type="hits" value="49 hits in 1159 CRISPR screens"/>
</dbReference>
<dbReference type="ChiTaRS" id="NDRG3">
    <property type="organism name" value="human"/>
</dbReference>
<dbReference type="GenomeRNAi" id="57446"/>
<dbReference type="Pharos" id="Q9UGV2">
    <property type="development level" value="Tbio"/>
</dbReference>
<dbReference type="PRO" id="PR:Q9UGV2"/>
<dbReference type="Proteomes" id="UP000005640">
    <property type="component" value="Chromosome 20"/>
</dbReference>
<dbReference type="RNAct" id="Q9UGV2">
    <property type="molecule type" value="protein"/>
</dbReference>
<dbReference type="Bgee" id="ENSG00000101079">
    <property type="expression patterns" value="Expressed in cerebellar vermis and 207 other cell types or tissues"/>
</dbReference>
<dbReference type="ExpressionAtlas" id="Q9UGV2">
    <property type="expression patterns" value="baseline and differential"/>
</dbReference>
<dbReference type="GO" id="GO:0005737">
    <property type="term" value="C:cytoplasm"/>
    <property type="evidence" value="ECO:0000314"/>
    <property type="project" value="UniProtKB"/>
</dbReference>
<dbReference type="GO" id="GO:0070062">
    <property type="term" value="C:extracellular exosome"/>
    <property type="evidence" value="ECO:0007005"/>
    <property type="project" value="UniProtKB"/>
</dbReference>
<dbReference type="GO" id="GO:0030154">
    <property type="term" value="P:cell differentiation"/>
    <property type="evidence" value="ECO:0000303"/>
    <property type="project" value="UniProtKB"/>
</dbReference>
<dbReference type="GO" id="GO:0030308">
    <property type="term" value="P:negative regulation of cell growth"/>
    <property type="evidence" value="ECO:0000303"/>
    <property type="project" value="UniProtKB"/>
</dbReference>
<dbReference type="GO" id="GO:0007165">
    <property type="term" value="P:signal transduction"/>
    <property type="evidence" value="ECO:0000318"/>
    <property type="project" value="GO_Central"/>
</dbReference>
<dbReference type="GO" id="GO:0007283">
    <property type="term" value="P:spermatogenesis"/>
    <property type="evidence" value="ECO:0000303"/>
    <property type="project" value="UniProtKB"/>
</dbReference>
<dbReference type="FunFam" id="3.40.50.1820:FF:000006">
    <property type="entry name" value="NDRG family member 3"/>
    <property type="match status" value="1"/>
</dbReference>
<dbReference type="Gene3D" id="3.40.50.1820">
    <property type="entry name" value="alpha/beta hydrolase"/>
    <property type="match status" value="1"/>
</dbReference>
<dbReference type="InterPro" id="IPR029058">
    <property type="entry name" value="AB_hydrolase_fold"/>
</dbReference>
<dbReference type="InterPro" id="IPR004142">
    <property type="entry name" value="NDRG"/>
</dbReference>
<dbReference type="PANTHER" id="PTHR11034">
    <property type="entry name" value="N-MYC DOWNSTREAM REGULATED"/>
    <property type="match status" value="1"/>
</dbReference>
<dbReference type="Pfam" id="PF03096">
    <property type="entry name" value="Ndr"/>
    <property type="match status" value="1"/>
</dbReference>
<dbReference type="SUPFAM" id="SSF53474">
    <property type="entry name" value="alpha/beta-Hydrolases"/>
    <property type="match status" value="1"/>
</dbReference>
<feature type="chain" id="PRO_0000159577" description="Protein NDRG3">
    <location>
        <begin position="1"/>
        <end position="375"/>
    </location>
</feature>
<feature type="region of interest" description="Disordered" evidence="2">
    <location>
        <begin position="326"/>
        <end position="375"/>
    </location>
</feature>
<feature type="compositionally biased region" description="Low complexity" evidence="2">
    <location>
        <begin position="330"/>
        <end position="346"/>
    </location>
</feature>
<feature type="compositionally biased region" description="Polar residues" evidence="2">
    <location>
        <begin position="347"/>
        <end position="359"/>
    </location>
</feature>
<feature type="compositionally biased region" description="Basic and acidic residues" evidence="2">
    <location>
        <begin position="364"/>
        <end position="375"/>
    </location>
</feature>
<feature type="modified residue" description="N-acetylmethionine" evidence="9 11">
    <location>
        <position position="1"/>
    </location>
</feature>
<feature type="modified residue" description="Phosphothreonine" evidence="8">
    <location>
        <position position="322"/>
    </location>
</feature>
<feature type="modified residue" description="Phosphothreonine" evidence="12">
    <location>
        <position position="329"/>
    </location>
</feature>
<feature type="modified residue" description="Phosphoserine" evidence="10 12 13">
    <location>
        <position position="331"/>
    </location>
</feature>
<feature type="modified residue" description="Phosphothreonine" evidence="12">
    <location>
        <position position="332"/>
    </location>
</feature>
<feature type="modified residue" description="Phosphoserine" evidence="12">
    <location>
        <position position="334"/>
    </location>
</feature>
<feature type="modified residue" description="Phosphoserine" evidence="8 10 12">
    <location>
        <position position="335"/>
    </location>
</feature>
<feature type="modified residue" description="Phosphoserine" evidence="12">
    <location>
        <position position="338"/>
    </location>
</feature>
<feature type="modified residue" description="Phosphoserine" evidence="12">
    <location>
        <position position="341"/>
    </location>
</feature>
<feature type="modified residue" description="Phosphoserine" evidence="8">
    <location>
        <position position="352"/>
    </location>
</feature>
<feature type="modified residue" description="Phosphothreonine" evidence="12">
    <location>
        <position position="355"/>
    </location>
</feature>
<feature type="modified residue" description="Phosphoserine" evidence="1">
    <location>
        <position position="361"/>
    </location>
</feature>
<feature type="modified residue" description="Phosphoserine" evidence="8">
    <location>
        <position position="374"/>
    </location>
</feature>
<feature type="splice variant" id="VSP_003419" description="In isoform 2." evidence="4 5 6">
    <location>
        <begin position="20"/>
        <end position="31"/>
    </location>
</feature>
<feature type="splice variant" id="VSP_003420" description="In isoform 3." evidence="4">
    <location>
        <begin position="47"/>
        <end position="135"/>
    </location>
</feature>
<feature type="sequence conflict" description="In Ref. 3; AAL08807." evidence="7" ref="3">
    <original>E</original>
    <variation>G</variation>
    <location>
        <position position="32"/>
    </location>
</feature>
<feature type="sequence conflict" description="In Ref. 4; BAB55277." evidence="7" ref="4">
    <original>F</original>
    <variation>S</variation>
    <location>
        <position position="71"/>
    </location>
</feature>
<feature type="sequence conflict" description="In Ref. 2; AAK34944." evidence="7" ref="2">
    <original>P</original>
    <variation>S</variation>
    <location>
        <position position="122"/>
    </location>
</feature>
<feature type="strand" evidence="14">
    <location>
        <begin position="31"/>
        <end position="37"/>
    </location>
</feature>
<feature type="strand" evidence="14">
    <location>
        <begin position="40"/>
        <end position="48"/>
    </location>
</feature>
<feature type="strand" evidence="14">
    <location>
        <begin position="52"/>
        <end position="54"/>
    </location>
</feature>
<feature type="strand" evidence="14">
    <location>
        <begin position="56"/>
        <end position="60"/>
    </location>
</feature>
<feature type="helix" evidence="14">
    <location>
        <begin position="67"/>
        <end position="75"/>
    </location>
</feature>
<feature type="helix" evidence="14">
    <location>
        <begin position="78"/>
        <end position="84"/>
    </location>
</feature>
<feature type="strand" evidence="14">
    <location>
        <begin position="89"/>
        <end position="93"/>
    </location>
</feature>
<feature type="turn" evidence="14">
    <location>
        <begin position="95"/>
        <end position="97"/>
    </location>
</feature>
<feature type="helix" evidence="14">
    <location>
        <begin position="113"/>
        <end position="118"/>
    </location>
</feature>
<feature type="helix" evidence="14">
    <location>
        <begin position="120"/>
        <end position="126"/>
    </location>
</feature>
<feature type="strand" evidence="14">
    <location>
        <begin position="132"/>
        <end position="137"/>
    </location>
</feature>
<feature type="helix" evidence="14">
    <location>
        <begin position="139"/>
        <end position="150"/>
    </location>
</feature>
<feature type="turn" evidence="14">
    <location>
        <begin position="152"/>
        <end position="154"/>
    </location>
</feature>
<feature type="strand" evidence="14">
    <location>
        <begin position="155"/>
        <end position="162"/>
    </location>
</feature>
<feature type="strand" evidence="16">
    <location>
        <begin position="173"/>
        <end position="176"/>
    </location>
</feature>
<feature type="helix" evidence="14">
    <location>
        <begin position="185"/>
        <end position="193"/>
    </location>
</feature>
<feature type="helix" evidence="14">
    <location>
        <begin position="196"/>
        <end position="201"/>
    </location>
</feature>
<feature type="helix" evidence="14">
    <location>
        <begin position="204"/>
        <end position="215"/>
    </location>
</feature>
<feature type="helix" evidence="14">
    <location>
        <begin position="219"/>
        <end position="230"/>
    </location>
</feature>
<feature type="strand" evidence="14">
    <location>
        <begin position="254"/>
        <end position="261"/>
    </location>
</feature>
<feature type="helix" evidence="14">
    <location>
        <begin position="267"/>
        <end position="275"/>
    </location>
</feature>
<feature type="turn" evidence="14">
    <location>
        <begin position="279"/>
        <end position="281"/>
    </location>
</feature>
<feature type="strand" evidence="14">
    <location>
        <begin position="282"/>
        <end position="289"/>
    </location>
</feature>
<feature type="helix" evidence="14">
    <location>
        <begin position="294"/>
        <end position="297"/>
    </location>
</feature>
<feature type="helix" evidence="14">
    <location>
        <begin position="299"/>
        <end position="312"/>
    </location>
</feature>
<feature type="strand" evidence="15">
    <location>
        <begin position="315"/>
        <end position="318"/>
    </location>
</feature>
<accession>Q9UGV2</accession>
<accession>A2A2S8</accession>
<accession>E1P5U7</accession>
<accession>E1P5U8</accession>
<accession>Q5TH32</accession>
<accession>Q96PL8</accession>
<accession>Q96SM2</accession>
<accession>Q9BXY7</accession>
<accession>Q9H3N7</accession>
<accession>Q9H411</accession>
<accession>Q9H8J6</accession>
<reference key="1">
    <citation type="journal article" date="2001" name="Genomics">
        <title>Characterization of the human NDRG gene family: a newly identified member, NDRG4, is specifically expressed in brain and heart.</title>
        <authorList>
            <person name="Zhou R.-H."/>
            <person name="Kokame K."/>
            <person name="Tsukamoto Y."/>
            <person name="Yutani C."/>
            <person name="Kato H."/>
            <person name="Miyata T."/>
        </authorList>
    </citation>
    <scope>NUCLEOTIDE SEQUENCE [MRNA] (ISOFORM 1)</scope>
    <scope>TISSUE SPECIFICITY</scope>
</reference>
<reference key="2">
    <citation type="submission" date="2000-03" db="EMBL/GenBank/DDBJ databases">
        <authorList>
            <person name="Mao Y."/>
            <person name="Xie Y."/>
            <person name="Zhou Z."/>
            <person name="Zhao W."/>
            <person name="Zhao S."/>
            <person name="Wang W."/>
            <person name="Huang Y."/>
            <person name="Wang S."/>
            <person name="Tang R."/>
            <person name="Chen X."/>
            <person name="Wu C."/>
        </authorList>
    </citation>
    <scope>NUCLEOTIDE SEQUENCE [MRNA] (ISOFORM 2)</scope>
</reference>
<reference key="3">
    <citation type="journal article" date="2002" name="Mol. Cell. Biochem.">
        <title>Characterization and expression of three novel differentiation-related genes belong to the human NDRG gene family.</title>
        <authorList>
            <person name="Qu X."/>
            <person name="Zhai Y."/>
            <person name="Wei H."/>
            <person name="Zhang C."/>
            <person name="Xing G."/>
            <person name="Yu Y."/>
            <person name="He F."/>
        </authorList>
    </citation>
    <scope>NUCLEOTIDE SEQUENCE [MRNA] (ISOFORM 1)</scope>
    <source>
        <tissue>Spleen</tissue>
    </source>
</reference>
<reference key="4">
    <citation type="journal article" date="2004" name="Nat. Genet.">
        <title>Complete sequencing and characterization of 21,243 full-length human cDNAs.</title>
        <authorList>
            <person name="Ota T."/>
            <person name="Suzuki Y."/>
            <person name="Nishikawa T."/>
            <person name="Otsuki T."/>
            <person name="Sugiyama T."/>
            <person name="Irie R."/>
            <person name="Wakamatsu A."/>
            <person name="Hayashi K."/>
            <person name="Sato H."/>
            <person name="Nagai K."/>
            <person name="Kimura K."/>
            <person name="Makita H."/>
            <person name="Sekine M."/>
            <person name="Obayashi M."/>
            <person name="Nishi T."/>
            <person name="Shibahara T."/>
            <person name="Tanaka T."/>
            <person name="Ishii S."/>
            <person name="Yamamoto J."/>
            <person name="Saito K."/>
            <person name="Kawai Y."/>
            <person name="Isono Y."/>
            <person name="Nakamura Y."/>
            <person name="Nagahari K."/>
            <person name="Murakami K."/>
            <person name="Yasuda T."/>
            <person name="Iwayanagi T."/>
            <person name="Wagatsuma M."/>
            <person name="Shiratori A."/>
            <person name="Sudo H."/>
            <person name="Hosoiri T."/>
            <person name="Kaku Y."/>
            <person name="Kodaira H."/>
            <person name="Kondo H."/>
            <person name="Sugawara M."/>
            <person name="Takahashi M."/>
            <person name="Kanda K."/>
            <person name="Yokoi T."/>
            <person name="Furuya T."/>
            <person name="Kikkawa E."/>
            <person name="Omura Y."/>
            <person name="Abe K."/>
            <person name="Kamihara K."/>
            <person name="Katsuta N."/>
            <person name="Sato K."/>
            <person name="Tanikawa M."/>
            <person name="Yamazaki M."/>
            <person name="Ninomiya K."/>
            <person name="Ishibashi T."/>
            <person name="Yamashita H."/>
            <person name="Murakawa K."/>
            <person name="Fujimori K."/>
            <person name="Tanai H."/>
            <person name="Kimata M."/>
            <person name="Watanabe M."/>
            <person name="Hiraoka S."/>
            <person name="Chiba Y."/>
            <person name="Ishida S."/>
            <person name="Ono Y."/>
            <person name="Takiguchi S."/>
            <person name="Watanabe S."/>
            <person name="Yosida M."/>
            <person name="Hotuta T."/>
            <person name="Kusano J."/>
            <person name="Kanehori K."/>
            <person name="Takahashi-Fujii A."/>
            <person name="Hara H."/>
            <person name="Tanase T.-O."/>
            <person name="Nomura Y."/>
            <person name="Togiya S."/>
            <person name="Komai F."/>
            <person name="Hara R."/>
            <person name="Takeuchi K."/>
            <person name="Arita M."/>
            <person name="Imose N."/>
            <person name="Musashino K."/>
            <person name="Yuuki H."/>
            <person name="Oshima A."/>
            <person name="Sasaki N."/>
            <person name="Aotsuka S."/>
            <person name="Yoshikawa Y."/>
            <person name="Matsunawa H."/>
            <person name="Ichihara T."/>
            <person name="Shiohata N."/>
            <person name="Sano S."/>
            <person name="Moriya S."/>
            <person name="Momiyama H."/>
            <person name="Satoh N."/>
            <person name="Takami S."/>
            <person name="Terashima Y."/>
            <person name="Suzuki O."/>
            <person name="Nakagawa S."/>
            <person name="Senoh A."/>
            <person name="Mizoguchi H."/>
            <person name="Goto Y."/>
            <person name="Shimizu F."/>
            <person name="Wakebe H."/>
            <person name="Hishigaki H."/>
            <person name="Watanabe T."/>
            <person name="Sugiyama A."/>
            <person name="Takemoto M."/>
            <person name="Kawakami B."/>
            <person name="Yamazaki M."/>
            <person name="Watanabe K."/>
            <person name="Kumagai A."/>
            <person name="Itakura S."/>
            <person name="Fukuzumi Y."/>
            <person name="Fujimori Y."/>
            <person name="Komiyama M."/>
            <person name="Tashiro H."/>
            <person name="Tanigami A."/>
            <person name="Fujiwara T."/>
            <person name="Ono T."/>
            <person name="Yamada K."/>
            <person name="Fujii Y."/>
            <person name="Ozaki K."/>
            <person name="Hirao M."/>
            <person name="Ohmori Y."/>
            <person name="Kawabata A."/>
            <person name="Hikiji T."/>
            <person name="Kobatake N."/>
            <person name="Inagaki H."/>
            <person name="Ikema Y."/>
            <person name="Okamoto S."/>
            <person name="Okitani R."/>
            <person name="Kawakami T."/>
            <person name="Noguchi S."/>
            <person name="Itoh T."/>
            <person name="Shigeta K."/>
            <person name="Senba T."/>
            <person name="Matsumura K."/>
            <person name="Nakajima Y."/>
            <person name="Mizuno T."/>
            <person name="Morinaga M."/>
            <person name="Sasaki M."/>
            <person name="Togashi T."/>
            <person name="Oyama M."/>
            <person name="Hata H."/>
            <person name="Watanabe M."/>
            <person name="Komatsu T."/>
            <person name="Mizushima-Sugano J."/>
            <person name="Satoh T."/>
            <person name="Shirai Y."/>
            <person name="Takahashi Y."/>
            <person name="Nakagawa K."/>
            <person name="Okumura K."/>
            <person name="Nagase T."/>
            <person name="Nomura N."/>
            <person name="Kikuchi H."/>
            <person name="Masuho Y."/>
            <person name="Yamashita R."/>
            <person name="Nakai K."/>
            <person name="Yada T."/>
            <person name="Nakamura Y."/>
            <person name="Ohara O."/>
            <person name="Isogai T."/>
            <person name="Sugano S."/>
        </authorList>
    </citation>
    <scope>NUCLEOTIDE SEQUENCE [LARGE SCALE MRNA] (ISOFORMS 2 AND 3)</scope>
    <source>
        <tissue>Placenta</tissue>
        <tissue>Teratocarcinoma</tissue>
    </source>
</reference>
<reference key="5">
    <citation type="journal article" date="2001" name="Nature">
        <title>The DNA sequence and comparative analysis of human chromosome 20.</title>
        <authorList>
            <person name="Deloukas P."/>
            <person name="Matthews L.H."/>
            <person name="Ashurst J.L."/>
            <person name="Burton J."/>
            <person name="Gilbert J.G.R."/>
            <person name="Jones M."/>
            <person name="Stavrides G."/>
            <person name="Almeida J.P."/>
            <person name="Babbage A.K."/>
            <person name="Bagguley C.L."/>
            <person name="Bailey J."/>
            <person name="Barlow K.F."/>
            <person name="Bates K.N."/>
            <person name="Beard L.M."/>
            <person name="Beare D.M."/>
            <person name="Beasley O.P."/>
            <person name="Bird C.P."/>
            <person name="Blakey S.E."/>
            <person name="Bridgeman A.M."/>
            <person name="Brown A.J."/>
            <person name="Buck D."/>
            <person name="Burrill W.D."/>
            <person name="Butler A.P."/>
            <person name="Carder C."/>
            <person name="Carter N.P."/>
            <person name="Chapman J.C."/>
            <person name="Clamp M."/>
            <person name="Clark G."/>
            <person name="Clark L.N."/>
            <person name="Clark S.Y."/>
            <person name="Clee C.M."/>
            <person name="Clegg S."/>
            <person name="Cobley V.E."/>
            <person name="Collier R.E."/>
            <person name="Connor R.E."/>
            <person name="Corby N.R."/>
            <person name="Coulson A."/>
            <person name="Coville G.J."/>
            <person name="Deadman R."/>
            <person name="Dhami P.D."/>
            <person name="Dunn M."/>
            <person name="Ellington A.G."/>
            <person name="Frankland J.A."/>
            <person name="Fraser A."/>
            <person name="French L."/>
            <person name="Garner P."/>
            <person name="Grafham D.V."/>
            <person name="Griffiths C."/>
            <person name="Griffiths M.N.D."/>
            <person name="Gwilliam R."/>
            <person name="Hall R.E."/>
            <person name="Hammond S."/>
            <person name="Harley J.L."/>
            <person name="Heath P.D."/>
            <person name="Ho S."/>
            <person name="Holden J.L."/>
            <person name="Howden P.J."/>
            <person name="Huckle E."/>
            <person name="Hunt A.R."/>
            <person name="Hunt S.E."/>
            <person name="Jekosch K."/>
            <person name="Johnson C.M."/>
            <person name="Johnson D."/>
            <person name="Kay M.P."/>
            <person name="Kimberley A.M."/>
            <person name="King A."/>
            <person name="Knights A."/>
            <person name="Laird G.K."/>
            <person name="Lawlor S."/>
            <person name="Lehvaeslaiho M.H."/>
            <person name="Leversha M.A."/>
            <person name="Lloyd C."/>
            <person name="Lloyd D.M."/>
            <person name="Lovell J.D."/>
            <person name="Marsh V.L."/>
            <person name="Martin S.L."/>
            <person name="McConnachie L.J."/>
            <person name="McLay K."/>
            <person name="McMurray A.A."/>
            <person name="Milne S.A."/>
            <person name="Mistry D."/>
            <person name="Moore M.J.F."/>
            <person name="Mullikin J.C."/>
            <person name="Nickerson T."/>
            <person name="Oliver K."/>
            <person name="Parker A."/>
            <person name="Patel R."/>
            <person name="Pearce T.A.V."/>
            <person name="Peck A.I."/>
            <person name="Phillimore B.J.C.T."/>
            <person name="Prathalingam S.R."/>
            <person name="Plumb R.W."/>
            <person name="Ramsay H."/>
            <person name="Rice C.M."/>
            <person name="Ross M.T."/>
            <person name="Scott C.E."/>
            <person name="Sehra H.K."/>
            <person name="Shownkeen R."/>
            <person name="Sims S."/>
            <person name="Skuce C.D."/>
            <person name="Smith M.L."/>
            <person name="Soderlund C."/>
            <person name="Steward C.A."/>
            <person name="Sulston J.E."/>
            <person name="Swann R.M."/>
            <person name="Sycamore N."/>
            <person name="Taylor R."/>
            <person name="Tee L."/>
            <person name="Thomas D.W."/>
            <person name="Thorpe A."/>
            <person name="Tracey A."/>
            <person name="Tromans A.C."/>
            <person name="Vaudin M."/>
            <person name="Wall M."/>
            <person name="Wallis J.M."/>
            <person name="Whitehead S.L."/>
            <person name="Whittaker P."/>
            <person name="Willey D.L."/>
            <person name="Williams L."/>
            <person name="Williams S.A."/>
            <person name="Wilming L."/>
            <person name="Wray P.W."/>
            <person name="Hubbard T."/>
            <person name="Durbin R.M."/>
            <person name="Bentley D.R."/>
            <person name="Beck S."/>
            <person name="Rogers J."/>
        </authorList>
    </citation>
    <scope>NUCLEOTIDE SEQUENCE [LARGE SCALE GENOMIC DNA]</scope>
</reference>
<reference key="6">
    <citation type="submission" date="2005-09" db="EMBL/GenBank/DDBJ databases">
        <authorList>
            <person name="Mural R.J."/>
            <person name="Istrail S."/>
            <person name="Sutton G.G."/>
            <person name="Florea L."/>
            <person name="Halpern A.L."/>
            <person name="Mobarry C.M."/>
            <person name="Lippert R."/>
            <person name="Walenz B."/>
            <person name="Shatkay H."/>
            <person name="Dew I."/>
            <person name="Miller J.R."/>
            <person name="Flanigan M.J."/>
            <person name="Edwards N.J."/>
            <person name="Bolanos R."/>
            <person name="Fasulo D."/>
            <person name="Halldorsson B.V."/>
            <person name="Hannenhalli S."/>
            <person name="Turner R."/>
            <person name="Yooseph S."/>
            <person name="Lu F."/>
            <person name="Nusskern D.R."/>
            <person name="Shue B.C."/>
            <person name="Zheng X.H."/>
            <person name="Zhong F."/>
            <person name="Delcher A.L."/>
            <person name="Huson D.H."/>
            <person name="Kravitz S.A."/>
            <person name="Mouchard L."/>
            <person name="Reinert K."/>
            <person name="Remington K.A."/>
            <person name="Clark A.G."/>
            <person name="Waterman M.S."/>
            <person name="Eichler E.E."/>
            <person name="Adams M.D."/>
            <person name="Hunkapiller M.W."/>
            <person name="Myers E.W."/>
            <person name="Venter J.C."/>
        </authorList>
    </citation>
    <scope>NUCLEOTIDE SEQUENCE [LARGE SCALE GENOMIC DNA]</scope>
</reference>
<reference key="7">
    <citation type="submission" date="2005-07" db="EMBL/GenBank/DDBJ databases">
        <authorList>
            <person name="Mural R.J."/>
            <person name="Istrail S."/>
            <person name="Sutton G."/>
            <person name="Florea L."/>
            <person name="Halpern A.L."/>
            <person name="Mobarry C.M."/>
            <person name="Lippert R."/>
            <person name="Walenz B."/>
            <person name="Shatkay H."/>
            <person name="Dew I."/>
            <person name="Miller J.R."/>
            <person name="Flanigan M.J."/>
            <person name="Edwards N.J."/>
            <person name="Bolanos R."/>
            <person name="Fasulo D."/>
            <person name="Halldorsson B.V."/>
            <person name="Hannenhalli S."/>
            <person name="Turner R."/>
            <person name="Yooseph S."/>
            <person name="Lu F."/>
            <person name="Nusskern D.R."/>
            <person name="Shue B.C."/>
            <person name="Zheng X.H."/>
            <person name="Zhong F."/>
            <person name="Delcher A.L."/>
            <person name="Huson D.H."/>
            <person name="Kravitz S.A."/>
            <person name="Mouchard L."/>
            <person name="Reinert K."/>
            <person name="Remington K.A."/>
            <person name="Clark A.G."/>
            <person name="Waterman M.S."/>
            <person name="Eichler E.E."/>
            <person name="Adams M.D."/>
            <person name="Hunkapiller M.W."/>
            <person name="Myers E.W."/>
            <person name="Venter J.C."/>
        </authorList>
    </citation>
    <scope>NUCLEOTIDE SEQUENCE [LARGE SCALE GENOMIC DNA]</scope>
</reference>
<reference key="8">
    <citation type="journal article" date="2004" name="Genome Res.">
        <title>The status, quality, and expansion of the NIH full-length cDNA project: the Mammalian Gene Collection (MGC).</title>
        <authorList>
            <consortium name="The MGC Project Team"/>
        </authorList>
    </citation>
    <scope>NUCLEOTIDE SEQUENCE [LARGE SCALE MRNA] (ISOFORM 2)</scope>
    <source>
        <tissue>Testis</tissue>
    </source>
</reference>
<reference key="9">
    <citation type="journal article" date="2008" name="Proc. Natl. Acad. Sci. U.S.A.">
        <title>A quantitative atlas of mitotic phosphorylation.</title>
        <authorList>
            <person name="Dephoure N."/>
            <person name="Zhou C."/>
            <person name="Villen J."/>
            <person name="Beausoleil S.A."/>
            <person name="Bakalarski C.E."/>
            <person name="Elledge S.J."/>
            <person name="Gygi S.P."/>
        </authorList>
    </citation>
    <scope>PHOSPHORYLATION [LARGE SCALE ANALYSIS] AT THR-322; SER-335; SER-352 AND SER-374</scope>
    <scope>IDENTIFICATION BY MASS SPECTROMETRY [LARGE SCALE ANALYSIS]</scope>
    <source>
        <tissue>Cervix carcinoma</tissue>
    </source>
</reference>
<reference key="10">
    <citation type="journal article" date="2009" name="Anal. Chem.">
        <title>Lys-N and trypsin cover complementary parts of the phosphoproteome in a refined SCX-based approach.</title>
        <authorList>
            <person name="Gauci S."/>
            <person name="Helbig A.O."/>
            <person name="Slijper M."/>
            <person name="Krijgsveld J."/>
            <person name="Heck A.J."/>
            <person name="Mohammed S."/>
        </authorList>
    </citation>
    <scope>ACETYLATION [LARGE SCALE ANALYSIS] AT MET-1</scope>
    <scope>IDENTIFICATION BY MASS SPECTROMETRY [LARGE SCALE ANALYSIS]</scope>
</reference>
<reference key="11">
    <citation type="journal article" date="2009" name="Sci. Signal.">
        <title>Quantitative phosphoproteomic analysis of T cell receptor signaling reveals system-wide modulation of protein-protein interactions.</title>
        <authorList>
            <person name="Mayya V."/>
            <person name="Lundgren D.H."/>
            <person name="Hwang S.-I."/>
            <person name="Rezaul K."/>
            <person name="Wu L."/>
            <person name="Eng J.K."/>
            <person name="Rodionov V."/>
            <person name="Han D.K."/>
        </authorList>
    </citation>
    <scope>PHOSPHORYLATION [LARGE SCALE ANALYSIS] AT SER-331 AND SER-335</scope>
    <scope>IDENTIFICATION BY MASS SPECTROMETRY [LARGE SCALE ANALYSIS]</scope>
    <source>
        <tissue>Leukemic T-cell</tissue>
    </source>
</reference>
<reference key="12">
    <citation type="journal article" date="2010" name="Sci. Signal.">
        <title>Quantitative phosphoproteomics reveals widespread full phosphorylation site occupancy during mitosis.</title>
        <authorList>
            <person name="Olsen J.V."/>
            <person name="Vermeulen M."/>
            <person name="Santamaria A."/>
            <person name="Kumar C."/>
            <person name="Miller M.L."/>
            <person name="Jensen L.J."/>
            <person name="Gnad F."/>
            <person name="Cox J."/>
            <person name="Jensen T.S."/>
            <person name="Nigg E.A."/>
            <person name="Brunak S."/>
            <person name="Mann M."/>
        </authorList>
    </citation>
    <scope>IDENTIFICATION BY MASS SPECTROMETRY [LARGE SCALE ANALYSIS]</scope>
    <source>
        <tissue>Cervix carcinoma</tissue>
    </source>
</reference>
<reference key="13">
    <citation type="journal article" date="2011" name="BMC Syst. Biol.">
        <title>Initial characterization of the human central proteome.</title>
        <authorList>
            <person name="Burkard T.R."/>
            <person name="Planyavsky M."/>
            <person name="Kaupe I."/>
            <person name="Breitwieser F.P."/>
            <person name="Buerckstuemmer T."/>
            <person name="Bennett K.L."/>
            <person name="Superti-Furga G."/>
            <person name="Colinge J."/>
        </authorList>
    </citation>
    <scope>IDENTIFICATION BY MASS SPECTROMETRY [LARGE SCALE ANALYSIS]</scope>
</reference>
<reference key="14">
    <citation type="journal article" date="2011" name="Sci. Signal.">
        <title>System-wide temporal characterization of the proteome and phosphoproteome of human embryonic stem cell differentiation.</title>
        <authorList>
            <person name="Rigbolt K.T."/>
            <person name="Prokhorova T.A."/>
            <person name="Akimov V."/>
            <person name="Henningsen J."/>
            <person name="Johansen P.T."/>
            <person name="Kratchmarova I."/>
            <person name="Kassem M."/>
            <person name="Mann M."/>
            <person name="Olsen J.V."/>
            <person name="Blagoev B."/>
        </authorList>
    </citation>
    <scope>IDENTIFICATION BY MASS SPECTROMETRY [LARGE SCALE ANALYSIS]</scope>
</reference>
<reference key="15">
    <citation type="journal article" date="2012" name="Proc. Natl. Acad. Sci. U.S.A.">
        <title>N-terminal acetylome analyses and functional insights of the N-terminal acetyltransferase NatB.</title>
        <authorList>
            <person name="Van Damme P."/>
            <person name="Lasa M."/>
            <person name="Polevoda B."/>
            <person name="Gazquez C."/>
            <person name="Elosegui-Artola A."/>
            <person name="Kim D.S."/>
            <person name="De Juan-Pardo E."/>
            <person name="Demeyer K."/>
            <person name="Hole K."/>
            <person name="Larrea E."/>
            <person name="Timmerman E."/>
            <person name="Prieto J."/>
            <person name="Arnesen T."/>
            <person name="Sherman F."/>
            <person name="Gevaert K."/>
            <person name="Aldabe R."/>
        </authorList>
    </citation>
    <scope>ACETYLATION [LARGE SCALE ANALYSIS] AT MET-1</scope>
    <scope>IDENTIFICATION BY MASS SPECTROMETRY [LARGE SCALE ANALYSIS]</scope>
</reference>
<reference key="16">
    <citation type="journal article" date="2013" name="J. Proteome Res.">
        <title>Toward a comprehensive characterization of a human cancer cell phosphoproteome.</title>
        <authorList>
            <person name="Zhou H."/>
            <person name="Di Palma S."/>
            <person name="Preisinger C."/>
            <person name="Peng M."/>
            <person name="Polat A.N."/>
            <person name="Heck A.J."/>
            <person name="Mohammed S."/>
        </authorList>
    </citation>
    <scope>PHOSPHORYLATION [LARGE SCALE ANALYSIS] AT THR-329; SER-331; THR-332; SER-334; SER-335; SER-338; SER-341 AND THR-355</scope>
    <scope>IDENTIFICATION BY MASS SPECTROMETRY [LARGE SCALE ANALYSIS]</scope>
    <source>
        <tissue>Cervix carcinoma</tissue>
        <tissue>Erythroleukemia</tissue>
    </source>
</reference>
<reference key="17">
    <citation type="journal article" date="2014" name="J. Proteomics">
        <title>An enzyme assisted RP-RPLC approach for in-depth analysis of human liver phosphoproteome.</title>
        <authorList>
            <person name="Bian Y."/>
            <person name="Song C."/>
            <person name="Cheng K."/>
            <person name="Dong M."/>
            <person name="Wang F."/>
            <person name="Huang J."/>
            <person name="Sun D."/>
            <person name="Wang L."/>
            <person name="Ye M."/>
            <person name="Zou H."/>
        </authorList>
    </citation>
    <scope>PHOSPHORYLATION [LARGE SCALE ANALYSIS] AT SER-331</scope>
    <scope>IDENTIFICATION BY MASS SPECTROMETRY [LARGE SCALE ANALYSIS]</scope>
    <source>
        <tissue>Liver</tissue>
    </source>
</reference>
<comment type="alternative products">
    <event type="alternative splicing"/>
    <isoform>
        <id>Q9UGV2-1</id>
        <name>1</name>
        <sequence type="displayed"/>
    </isoform>
    <isoform>
        <id>Q9UGV2-2</id>
        <name>2</name>
        <sequence type="described" ref="VSP_003419"/>
    </isoform>
    <isoform>
        <id>Q9UGV2-3</id>
        <name>3</name>
        <sequence type="described" ref="VSP_003420"/>
    </isoform>
</comment>
<comment type="tissue specificity">
    <text evidence="3">Ubiquitous. Highly expressed in brain.</text>
</comment>
<comment type="similarity">
    <text evidence="7">Belongs to the NDRG family.</text>
</comment>
<proteinExistence type="evidence at protein level"/>
<protein>
    <recommendedName>
        <fullName>Protein NDRG3</fullName>
    </recommendedName>
    <alternativeName>
        <fullName>N-myc downstream-regulated gene 3 protein</fullName>
    </alternativeName>
</protein>
<evidence type="ECO:0000250" key="1">
    <source>
        <dbReference type="UniProtKB" id="Q9QYF9"/>
    </source>
</evidence>
<evidence type="ECO:0000256" key="2">
    <source>
        <dbReference type="SAM" id="MobiDB-lite"/>
    </source>
</evidence>
<evidence type="ECO:0000269" key="3">
    <source>
    </source>
</evidence>
<evidence type="ECO:0000303" key="4">
    <source>
    </source>
</evidence>
<evidence type="ECO:0000303" key="5">
    <source>
    </source>
</evidence>
<evidence type="ECO:0000303" key="6">
    <source ref="2"/>
</evidence>
<evidence type="ECO:0000305" key="7"/>
<evidence type="ECO:0007744" key="8">
    <source>
    </source>
</evidence>
<evidence type="ECO:0007744" key="9">
    <source>
    </source>
</evidence>
<evidence type="ECO:0007744" key="10">
    <source>
    </source>
</evidence>
<evidence type="ECO:0007744" key="11">
    <source>
    </source>
</evidence>
<evidence type="ECO:0007744" key="12">
    <source>
    </source>
</evidence>
<evidence type="ECO:0007744" key="13">
    <source>
    </source>
</evidence>
<evidence type="ECO:0007829" key="14">
    <source>
        <dbReference type="PDB" id="6L4B"/>
    </source>
</evidence>
<evidence type="ECO:0007829" key="15">
    <source>
        <dbReference type="PDB" id="6L4G"/>
    </source>
</evidence>
<evidence type="ECO:0007829" key="16">
    <source>
        <dbReference type="PDB" id="6L4H"/>
    </source>
</evidence>
<name>NDRG3_HUMAN</name>
<keyword id="KW-0002">3D-structure</keyword>
<keyword id="KW-0007">Acetylation</keyword>
<keyword id="KW-0025">Alternative splicing</keyword>
<keyword id="KW-0597">Phosphoprotein</keyword>
<keyword id="KW-1267">Proteomics identification</keyword>
<keyword id="KW-1185">Reference proteome</keyword>
<sequence length="375" mass="41409">MDELQDVQLTEIKPLLNDKNGTRNFQDFDCQEHDIETTHGVVHVTIRGLPKGNRPVILTYHDIGLNHKSCFNAFFNFEDMQEITQHFAVCHVDAPGQQEGAPSFPTGYQYPTMDELAEMLPPVLTHLSLKSIIGIGVGAGAYILSRFALNHPELVEGLVLINVDPCAKGWIDWAASKLSGLTTNVVDIILAHHFGQEELQANLDLIQTYRMHIAQDINQDNLQLFLNSYNGRRDLEIERPILGQNDNKSKTLKCSTLLVVGDNSPAVEAVVECNSRLNPINTTLLKMADCGGLPQVVQPGKLTEAFKYFLQGMGYIPSASMTRLARSRTHSTSSSLGSGESPFSRSVTSNQSDGTQESCESPDVLDRHQTMEVSC</sequence>
<organism>
    <name type="scientific">Homo sapiens</name>
    <name type="common">Human</name>
    <dbReference type="NCBI Taxonomy" id="9606"/>
    <lineage>
        <taxon>Eukaryota</taxon>
        <taxon>Metazoa</taxon>
        <taxon>Chordata</taxon>
        <taxon>Craniata</taxon>
        <taxon>Vertebrata</taxon>
        <taxon>Euteleostomi</taxon>
        <taxon>Mammalia</taxon>
        <taxon>Eutheria</taxon>
        <taxon>Euarchontoglires</taxon>
        <taxon>Primates</taxon>
        <taxon>Haplorrhini</taxon>
        <taxon>Catarrhini</taxon>
        <taxon>Hominidae</taxon>
        <taxon>Homo</taxon>
    </lineage>
</organism>